<proteinExistence type="inferred from homology"/>
<accession>Q72YV6</accession>
<protein>
    <recommendedName>
        <fullName evidence="1">S-adenosylmethionine synthase</fullName>
        <shortName evidence="1">AdoMet synthase</shortName>
        <ecNumber evidence="1">2.5.1.6</ecNumber>
    </recommendedName>
    <alternativeName>
        <fullName evidence="1">MAT</fullName>
    </alternativeName>
    <alternativeName>
        <fullName evidence="1">Methionine adenosyltransferase</fullName>
    </alternativeName>
</protein>
<dbReference type="EC" id="2.5.1.6" evidence="1"/>
<dbReference type="EMBL" id="AE017194">
    <property type="protein sequence ID" value="AAS43815.1"/>
    <property type="molecule type" value="Genomic_DNA"/>
</dbReference>
<dbReference type="SMR" id="Q72YV6"/>
<dbReference type="KEGG" id="bca:BCE_4914"/>
<dbReference type="HOGENOM" id="CLU_041802_1_1_9"/>
<dbReference type="UniPathway" id="UPA00315">
    <property type="reaction ID" value="UER00080"/>
</dbReference>
<dbReference type="Proteomes" id="UP000002527">
    <property type="component" value="Chromosome"/>
</dbReference>
<dbReference type="GO" id="GO:0005737">
    <property type="term" value="C:cytoplasm"/>
    <property type="evidence" value="ECO:0007669"/>
    <property type="project" value="UniProtKB-SubCell"/>
</dbReference>
<dbReference type="GO" id="GO:0005524">
    <property type="term" value="F:ATP binding"/>
    <property type="evidence" value="ECO:0007669"/>
    <property type="project" value="UniProtKB-UniRule"/>
</dbReference>
<dbReference type="GO" id="GO:0000287">
    <property type="term" value="F:magnesium ion binding"/>
    <property type="evidence" value="ECO:0007669"/>
    <property type="project" value="UniProtKB-UniRule"/>
</dbReference>
<dbReference type="GO" id="GO:0004478">
    <property type="term" value="F:methionine adenosyltransferase activity"/>
    <property type="evidence" value="ECO:0007669"/>
    <property type="project" value="UniProtKB-UniRule"/>
</dbReference>
<dbReference type="GO" id="GO:0006730">
    <property type="term" value="P:one-carbon metabolic process"/>
    <property type="evidence" value="ECO:0007669"/>
    <property type="project" value="UniProtKB-KW"/>
</dbReference>
<dbReference type="GO" id="GO:0006556">
    <property type="term" value="P:S-adenosylmethionine biosynthetic process"/>
    <property type="evidence" value="ECO:0007669"/>
    <property type="project" value="UniProtKB-UniRule"/>
</dbReference>
<dbReference type="CDD" id="cd18079">
    <property type="entry name" value="S-AdoMet_synt"/>
    <property type="match status" value="1"/>
</dbReference>
<dbReference type="FunFam" id="3.30.300.10:FF:000003">
    <property type="entry name" value="S-adenosylmethionine synthase"/>
    <property type="match status" value="1"/>
</dbReference>
<dbReference type="FunFam" id="3.30.300.10:FF:000004">
    <property type="entry name" value="S-adenosylmethionine synthase"/>
    <property type="match status" value="1"/>
</dbReference>
<dbReference type="Gene3D" id="3.30.300.10">
    <property type="match status" value="3"/>
</dbReference>
<dbReference type="HAMAP" id="MF_00086">
    <property type="entry name" value="S_AdoMet_synth1"/>
    <property type="match status" value="1"/>
</dbReference>
<dbReference type="InterPro" id="IPR022631">
    <property type="entry name" value="ADOMET_SYNTHASE_CS"/>
</dbReference>
<dbReference type="InterPro" id="IPR022630">
    <property type="entry name" value="S-AdoMet_synt_C"/>
</dbReference>
<dbReference type="InterPro" id="IPR022629">
    <property type="entry name" value="S-AdoMet_synt_central"/>
</dbReference>
<dbReference type="InterPro" id="IPR022628">
    <property type="entry name" value="S-AdoMet_synt_N"/>
</dbReference>
<dbReference type="InterPro" id="IPR002133">
    <property type="entry name" value="S-AdoMet_synthetase"/>
</dbReference>
<dbReference type="InterPro" id="IPR022636">
    <property type="entry name" value="S-AdoMet_synthetase_sfam"/>
</dbReference>
<dbReference type="NCBIfam" id="TIGR01034">
    <property type="entry name" value="metK"/>
    <property type="match status" value="1"/>
</dbReference>
<dbReference type="PANTHER" id="PTHR11964">
    <property type="entry name" value="S-ADENOSYLMETHIONINE SYNTHETASE"/>
    <property type="match status" value="1"/>
</dbReference>
<dbReference type="Pfam" id="PF02773">
    <property type="entry name" value="S-AdoMet_synt_C"/>
    <property type="match status" value="1"/>
</dbReference>
<dbReference type="Pfam" id="PF02772">
    <property type="entry name" value="S-AdoMet_synt_M"/>
    <property type="match status" value="1"/>
</dbReference>
<dbReference type="Pfam" id="PF00438">
    <property type="entry name" value="S-AdoMet_synt_N"/>
    <property type="match status" value="1"/>
</dbReference>
<dbReference type="PIRSF" id="PIRSF000497">
    <property type="entry name" value="MAT"/>
    <property type="match status" value="1"/>
</dbReference>
<dbReference type="SUPFAM" id="SSF55973">
    <property type="entry name" value="S-adenosylmethionine synthetase"/>
    <property type="match status" value="3"/>
</dbReference>
<dbReference type="PROSITE" id="PS00376">
    <property type="entry name" value="ADOMET_SYNTHASE_1"/>
    <property type="match status" value="1"/>
</dbReference>
<dbReference type="PROSITE" id="PS00377">
    <property type="entry name" value="ADOMET_SYNTHASE_2"/>
    <property type="match status" value="1"/>
</dbReference>
<feature type="chain" id="PRO_0000174484" description="S-adenosylmethionine synthase">
    <location>
        <begin position="1"/>
        <end position="399"/>
    </location>
</feature>
<feature type="region of interest" description="Flexible loop" evidence="1">
    <location>
        <begin position="101"/>
        <end position="111"/>
    </location>
</feature>
<feature type="binding site" description="in other chain" evidence="1">
    <location>
        <position position="17"/>
    </location>
    <ligand>
        <name>ATP</name>
        <dbReference type="ChEBI" id="CHEBI:30616"/>
        <note>ligand shared between two neighboring subunits</note>
    </ligand>
</feature>
<feature type="binding site" evidence="1">
    <location>
        <position position="19"/>
    </location>
    <ligand>
        <name>Mg(2+)</name>
        <dbReference type="ChEBI" id="CHEBI:18420"/>
    </ligand>
</feature>
<feature type="binding site" evidence="1">
    <location>
        <position position="45"/>
    </location>
    <ligand>
        <name>K(+)</name>
        <dbReference type="ChEBI" id="CHEBI:29103"/>
    </ligand>
</feature>
<feature type="binding site" description="in other chain" evidence="1">
    <location>
        <position position="58"/>
    </location>
    <ligand>
        <name>L-methionine</name>
        <dbReference type="ChEBI" id="CHEBI:57844"/>
        <note>ligand shared between two neighboring subunits</note>
    </ligand>
</feature>
<feature type="binding site" description="in other chain" evidence="1">
    <location>
        <position position="101"/>
    </location>
    <ligand>
        <name>L-methionine</name>
        <dbReference type="ChEBI" id="CHEBI:57844"/>
        <note>ligand shared between two neighboring subunits</note>
    </ligand>
</feature>
<feature type="binding site" description="in other chain" evidence="1">
    <location>
        <begin position="177"/>
        <end position="179"/>
    </location>
    <ligand>
        <name>ATP</name>
        <dbReference type="ChEBI" id="CHEBI:30616"/>
        <note>ligand shared between two neighboring subunits</note>
    </ligand>
</feature>
<feature type="binding site" description="in other chain" evidence="1">
    <location>
        <begin position="244"/>
        <end position="245"/>
    </location>
    <ligand>
        <name>ATP</name>
        <dbReference type="ChEBI" id="CHEBI:30616"/>
        <note>ligand shared between two neighboring subunits</note>
    </ligand>
</feature>
<feature type="binding site" evidence="1">
    <location>
        <position position="253"/>
    </location>
    <ligand>
        <name>ATP</name>
        <dbReference type="ChEBI" id="CHEBI:30616"/>
        <note>ligand shared between two neighboring subunits</note>
    </ligand>
</feature>
<feature type="binding site" evidence="1">
    <location>
        <position position="253"/>
    </location>
    <ligand>
        <name>L-methionine</name>
        <dbReference type="ChEBI" id="CHEBI:57844"/>
        <note>ligand shared between two neighboring subunits</note>
    </ligand>
</feature>
<feature type="binding site" description="in other chain" evidence="1">
    <location>
        <begin position="259"/>
        <end position="260"/>
    </location>
    <ligand>
        <name>ATP</name>
        <dbReference type="ChEBI" id="CHEBI:30616"/>
        <note>ligand shared between two neighboring subunits</note>
    </ligand>
</feature>
<feature type="binding site" evidence="1">
    <location>
        <position position="276"/>
    </location>
    <ligand>
        <name>ATP</name>
        <dbReference type="ChEBI" id="CHEBI:30616"/>
        <note>ligand shared between two neighboring subunits</note>
    </ligand>
</feature>
<feature type="binding site" evidence="1">
    <location>
        <position position="280"/>
    </location>
    <ligand>
        <name>ATP</name>
        <dbReference type="ChEBI" id="CHEBI:30616"/>
        <note>ligand shared between two neighboring subunits</note>
    </ligand>
</feature>
<feature type="binding site" description="in other chain" evidence="1">
    <location>
        <position position="284"/>
    </location>
    <ligand>
        <name>L-methionine</name>
        <dbReference type="ChEBI" id="CHEBI:57844"/>
        <note>ligand shared between two neighboring subunits</note>
    </ligand>
</feature>
<name>METK_BACC1</name>
<sequence>MTKKRHLFTSESVTEGHPDKICDQISDSILDAILSKDANARVACETTVTTGLVLVAGEITTSTYVDIPKIVRETIQGIGYTRAKYGFDAETCAVLTSIDEQSADIAMGVDQALEAREGQMTDAEIEAIGAGDQGLMFGFACNETQELMPLPISLAHKLARRLTEVRKDDTLSYLRPDGKTQVTVEYDENGKPVRVDTIVISTQHHPDVTWEEIDRDLKEHVIKAVVPAELIDGETKFFINPTGRFVIGGPQGDAGLTGRKIIVDTYGGYARHGGGAFSGKDATKVDRSAAYAARYVAKNIVAAGLAEKAEVQLAYAIGVAQPVSISVDTFGTGKVSEDVLVELVRNNFDLRPAGIIKMLDLRRPIYKQTAAYGHFGRTDVDLSWERTDKAAALKEQAGL</sequence>
<gene>
    <name evidence="1" type="primary">metK</name>
    <name type="ordered locus">BCE_4914</name>
</gene>
<reference key="1">
    <citation type="journal article" date="2004" name="Nucleic Acids Res.">
        <title>The genome sequence of Bacillus cereus ATCC 10987 reveals metabolic adaptations and a large plasmid related to Bacillus anthracis pXO1.</title>
        <authorList>
            <person name="Rasko D.A."/>
            <person name="Ravel J."/>
            <person name="Oekstad O.A."/>
            <person name="Helgason E."/>
            <person name="Cer R.Z."/>
            <person name="Jiang L."/>
            <person name="Shores K.A."/>
            <person name="Fouts D.E."/>
            <person name="Tourasse N.J."/>
            <person name="Angiuoli S.V."/>
            <person name="Kolonay J.F."/>
            <person name="Nelson W.C."/>
            <person name="Kolstoe A.-B."/>
            <person name="Fraser C.M."/>
            <person name="Read T.D."/>
        </authorList>
    </citation>
    <scope>NUCLEOTIDE SEQUENCE [LARGE SCALE GENOMIC DNA]</scope>
    <source>
        <strain>ATCC 10987 / NRS 248</strain>
    </source>
</reference>
<organism>
    <name type="scientific">Bacillus cereus (strain ATCC 10987 / NRS 248)</name>
    <dbReference type="NCBI Taxonomy" id="222523"/>
    <lineage>
        <taxon>Bacteria</taxon>
        <taxon>Bacillati</taxon>
        <taxon>Bacillota</taxon>
        <taxon>Bacilli</taxon>
        <taxon>Bacillales</taxon>
        <taxon>Bacillaceae</taxon>
        <taxon>Bacillus</taxon>
        <taxon>Bacillus cereus group</taxon>
    </lineage>
</organism>
<keyword id="KW-0067">ATP-binding</keyword>
<keyword id="KW-0963">Cytoplasm</keyword>
<keyword id="KW-0460">Magnesium</keyword>
<keyword id="KW-0479">Metal-binding</keyword>
<keyword id="KW-0547">Nucleotide-binding</keyword>
<keyword id="KW-0554">One-carbon metabolism</keyword>
<keyword id="KW-0630">Potassium</keyword>
<keyword id="KW-0808">Transferase</keyword>
<comment type="function">
    <text evidence="1">Catalyzes the formation of S-adenosylmethionine (AdoMet) from methionine and ATP. The overall synthetic reaction is composed of two sequential steps, AdoMet formation and the subsequent tripolyphosphate hydrolysis which occurs prior to release of AdoMet from the enzyme.</text>
</comment>
<comment type="catalytic activity">
    <reaction evidence="1">
        <text>L-methionine + ATP + H2O = S-adenosyl-L-methionine + phosphate + diphosphate</text>
        <dbReference type="Rhea" id="RHEA:21080"/>
        <dbReference type="ChEBI" id="CHEBI:15377"/>
        <dbReference type="ChEBI" id="CHEBI:30616"/>
        <dbReference type="ChEBI" id="CHEBI:33019"/>
        <dbReference type="ChEBI" id="CHEBI:43474"/>
        <dbReference type="ChEBI" id="CHEBI:57844"/>
        <dbReference type="ChEBI" id="CHEBI:59789"/>
        <dbReference type="EC" id="2.5.1.6"/>
    </reaction>
</comment>
<comment type="cofactor">
    <cofactor evidence="1">
        <name>Mg(2+)</name>
        <dbReference type="ChEBI" id="CHEBI:18420"/>
    </cofactor>
    <text evidence="1">Binds 2 divalent ions per subunit.</text>
</comment>
<comment type="cofactor">
    <cofactor evidence="1">
        <name>K(+)</name>
        <dbReference type="ChEBI" id="CHEBI:29103"/>
    </cofactor>
    <text evidence="1">Binds 1 potassium ion per subunit.</text>
</comment>
<comment type="pathway">
    <text evidence="1">Amino-acid biosynthesis; S-adenosyl-L-methionine biosynthesis; S-adenosyl-L-methionine from L-methionine: step 1/1.</text>
</comment>
<comment type="subunit">
    <text evidence="1">Homotetramer; dimer of dimers.</text>
</comment>
<comment type="subcellular location">
    <subcellularLocation>
        <location evidence="1">Cytoplasm</location>
    </subcellularLocation>
</comment>
<comment type="similarity">
    <text evidence="1">Belongs to the AdoMet synthase family.</text>
</comment>
<evidence type="ECO:0000255" key="1">
    <source>
        <dbReference type="HAMAP-Rule" id="MF_00086"/>
    </source>
</evidence>